<proteinExistence type="evidence at protein level"/>
<accession>A0A286YEY9</accession>
<evidence type="ECO:0000303" key="1">
    <source>
    </source>
</evidence>
<evidence type="ECO:0000305" key="2"/>
<evidence type="ECO:0000305" key="3">
    <source>
    </source>
</evidence>
<evidence type="ECO:0000312" key="4">
    <source>
        <dbReference type="HGNC" id="HGNC:34218"/>
    </source>
</evidence>
<gene>
    <name evidence="4" type="primary">SCYGR1</name>
    <name evidence="1" type="synonym">KRTAP28-1</name>
</gene>
<comment type="function">
    <text evidence="2">In the hair cortex, hair keratin intermediate filaments are embedded in an interfilamentous matrix, consisting of hair keratin-associated proteins (KRTAP), which are essential for the formation of a rigid and resistant hair shaft through their extensive disulfide bond cross-linking with abundant cysteine residues of hair keratins. The matrix proteins include the high-sulfur and high-glycine-tyrosine keratins.</text>
</comment>
<comment type="miscellaneous">
    <text evidence="1">Human have a similar number of genes as other primates despite the relative hairlessness of humans.</text>
</comment>
<comment type="similarity">
    <text evidence="3">Belongs to the KRTAP type 28 family.</text>
</comment>
<dbReference type="EMBL" id="AC097662">
    <property type="status" value="NOT_ANNOTATED_CDS"/>
    <property type="molecule type" value="Genomic_DNA"/>
</dbReference>
<dbReference type="CCDS" id="CCDS92952.1"/>
<dbReference type="RefSeq" id="NP_001382331.1">
    <property type="nucleotide sequence ID" value="NM_001395402.1"/>
</dbReference>
<dbReference type="STRING" id="9606.ENSP00000493109"/>
<dbReference type="BioMuta" id="ENSG00000284629"/>
<dbReference type="MassIVE" id="A0A286YEY9"/>
<dbReference type="PeptideAtlas" id="A0A286YEY9"/>
<dbReference type="Ensembl" id="ENST00000641359.1">
    <property type="protein sequence ID" value="ENSP00000493109.1"/>
    <property type="gene ID" value="ENSG00000284629.1"/>
</dbReference>
<dbReference type="GeneID" id="112441428"/>
<dbReference type="MANE-Select" id="ENST00000641359.1">
    <property type="protein sequence ID" value="ENSP00000493109.1"/>
    <property type="RefSeq nucleotide sequence ID" value="NM_001395402.1"/>
    <property type="RefSeq protein sequence ID" value="NP_001382331.1"/>
</dbReference>
<dbReference type="AGR" id="HGNC:34218"/>
<dbReference type="GeneCards" id="SCYGR1"/>
<dbReference type="HGNC" id="HGNC:34218">
    <property type="gene designation" value="SCYGR1"/>
</dbReference>
<dbReference type="HPA" id="ENSG00000284629">
    <property type="expression patterns" value="Not detected"/>
</dbReference>
<dbReference type="neXtProt" id="NX_A0A286YEY9"/>
<dbReference type="VEuPathDB" id="HostDB:ENSG00000284629"/>
<dbReference type="GeneTree" id="ENSGT00950000183883"/>
<dbReference type="InParanoid" id="A0A286YEY9"/>
<dbReference type="OMA" id="CAGNCKC"/>
<dbReference type="PAN-GO" id="A0A286YEY9">
    <property type="GO annotations" value="0 GO annotations based on evolutionary models"/>
</dbReference>
<dbReference type="Pharos" id="A0A286YEY9">
    <property type="development level" value="Tdark"/>
</dbReference>
<dbReference type="PRO" id="PR:A0A286YEY9"/>
<dbReference type="Proteomes" id="UP000005640">
    <property type="component" value="Chromosome 2"/>
</dbReference>
<dbReference type="Bgee" id="ENSG00000284629">
    <property type="expression patterns" value="Expressed in C1 segment of cervical spinal cord and 37 other cell types or tissues"/>
</dbReference>
<dbReference type="GO" id="GO:0005882">
    <property type="term" value="C:intermediate filament"/>
    <property type="evidence" value="ECO:0007669"/>
    <property type="project" value="UniProtKB-KW"/>
</dbReference>
<organism>
    <name type="scientific">Homo sapiens</name>
    <name type="common">Human</name>
    <dbReference type="NCBI Taxonomy" id="9606"/>
    <lineage>
        <taxon>Eukaryota</taxon>
        <taxon>Metazoa</taxon>
        <taxon>Chordata</taxon>
        <taxon>Craniata</taxon>
        <taxon>Vertebrata</taxon>
        <taxon>Euteleostomi</taxon>
        <taxon>Mammalia</taxon>
        <taxon>Eutheria</taxon>
        <taxon>Euarchontoglires</taxon>
        <taxon>Primates</taxon>
        <taxon>Haplorrhini</taxon>
        <taxon>Catarrhini</taxon>
        <taxon>Hominidae</taxon>
        <taxon>Homo</taxon>
    </lineage>
</organism>
<name>SCGR1_HUMAN</name>
<reference key="1">
    <citation type="journal article" date="2005" name="Nature">
        <title>Generation and annotation of the DNA sequences of human chromosomes 2 and 4.</title>
        <authorList>
            <person name="Hillier L.W."/>
            <person name="Graves T.A."/>
            <person name="Fulton R.S."/>
            <person name="Fulton L.A."/>
            <person name="Pepin K.H."/>
            <person name="Minx P."/>
            <person name="Wagner-McPherson C."/>
            <person name="Layman D."/>
            <person name="Wylie K."/>
            <person name="Sekhon M."/>
            <person name="Becker M.C."/>
            <person name="Fewell G.A."/>
            <person name="Delehaunty K.D."/>
            <person name="Miner T.L."/>
            <person name="Nash W.E."/>
            <person name="Kremitzki C."/>
            <person name="Oddy L."/>
            <person name="Du H."/>
            <person name="Sun H."/>
            <person name="Bradshaw-Cordum H."/>
            <person name="Ali J."/>
            <person name="Carter J."/>
            <person name="Cordes M."/>
            <person name="Harris A."/>
            <person name="Isak A."/>
            <person name="van Brunt A."/>
            <person name="Nguyen C."/>
            <person name="Du F."/>
            <person name="Courtney L."/>
            <person name="Kalicki J."/>
            <person name="Ozersky P."/>
            <person name="Abbott S."/>
            <person name="Armstrong J."/>
            <person name="Belter E.A."/>
            <person name="Caruso L."/>
            <person name="Cedroni M."/>
            <person name="Cotton M."/>
            <person name="Davidson T."/>
            <person name="Desai A."/>
            <person name="Elliott G."/>
            <person name="Erb T."/>
            <person name="Fronick C."/>
            <person name="Gaige T."/>
            <person name="Haakenson W."/>
            <person name="Haglund K."/>
            <person name="Holmes A."/>
            <person name="Harkins R."/>
            <person name="Kim K."/>
            <person name="Kruchowski S.S."/>
            <person name="Strong C.M."/>
            <person name="Grewal N."/>
            <person name="Goyea E."/>
            <person name="Hou S."/>
            <person name="Levy A."/>
            <person name="Martinka S."/>
            <person name="Mead K."/>
            <person name="McLellan M.D."/>
            <person name="Meyer R."/>
            <person name="Randall-Maher J."/>
            <person name="Tomlinson C."/>
            <person name="Dauphin-Kohlberg S."/>
            <person name="Kozlowicz-Reilly A."/>
            <person name="Shah N."/>
            <person name="Swearengen-Shahid S."/>
            <person name="Snider J."/>
            <person name="Strong J.T."/>
            <person name="Thompson J."/>
            <person name="Yoakum M."/>
            <person name="Leonard S."/>
            <person name="Pearman C."/>
            <person name="Trani L."/>
            <person name="Radionenko M."/>
            <person name="Waligorski J.E."/>
            <person name="Wang C."/>
            <person name="Rock S.M."/>
            <person name="Tin-Wollam A.-M."/>
            <person name="Maupin R."/>
            <person name="Latreille P."/>
            <person name="Wendl M.C."/>
            <person name="Yang S.-P."/>
            <person name="Pohl C."/>
            <person name="Wallis J.W."/>
            <person name="Spieth J."/>
            <person name="Bieri T.A."/>
            <person name="Berkowicz N."/>
            <person name="Nelson J.O."/>
            <person name="Osborne J."/>
            <person name="Ding L."/>
            <person name="Meyer R."/>
            <person name="Sabo A."/>
            <person name="Shotland Y."/>
            <person name="Sinha P."/>
            <person name="Wohldmann P.E."/>
            <person name="Cook L.L."/>
            <person name="Hickenbotham M.T."/>
            <person name="Eldred J."/>
            <person name="Williams D."/>
            <person name="Jones T.A."/>
            <person name="She X."/>
            <person name="Ciccarelli F.D."/>
            <person name="Izaurralde E."/>
            <person name="Taylor J."/>
            <person name="Schmutz J."/>
            <person name="Myers R.M."/>
            <person name="Cox D.R."/>
            <person name="Huang X."/>
            <person name="McPherson J.D."/>
            <person name="Mardis E.R."/>
            <person name="Clifton S.W."/>
            <person name="Warren W.C."/>
            <person name="Chinwalla A.T."/>
            <person name="Eddy S.R."/>
            <person name="Marra M.A."/>
            <person name="Ovcharenko I."/>
            <person name="Furey T.S."/>
            <person name="Miller W."/>
            <person name="Eichler E.E."/>
            <person name="Bork P."/>
            <person name="Suyama M."/>
            <person name="Torrents D."/>
            <person name="Waterston R.H."/>
            <person name="Wilson R.K."/>
        </authorList>
    </citation>
    <scope>NUCLEOTIDE SEQUENCE [LARGE SCALE GENOMIC DNA]</scope>
</reference>
<reference key="2">
    <citation type="journal article" date="2008" name="BMC Evol. Biol.">
        <title>Molecular evolution of the keratin associated protein gene family in mammals, role in the evolution of mammalian hair.</title>
        <authorList>
            <person name="Wu D.D."/>
            <person name="Irwin D.M."/>
            <person name="Zhang Y.P."/>
        </authorList>
    </citation>
    <scope>FAMILY CHARACTERIZATION</scope>
</reference>
<protein>
    <recommendedName>
        <fullName evidence="2">Small cysteine and glycine repeat-containing protein 1</fullName>
    </recommendedName>
    <alternativeName>
        <fullName evidence="1">Keratin-associated protein 28-1</fullName>
    </alternativeName>
</protein>
<feature type="chain" id="PRO_0000445141" description="Small cysteine and glycine repeat-containing protein 1">
    <location>
        <begin position="1"/>
        <end position="88"/>
    </location>
</feature>
<feature type="region of interest" description="10 X 2 AA repeats of CG">
    <location>
        <begin position="4"/>
        <end position="72"/>
    </location>
</feature>
<keyword id="KW-0416">Keratin</keyword>
<keyword id="KW-1185">Reference proteome</keyword>
<keyword id="KW-0677">Repeat</keyword>
<sequence>MGCCGCGGCGGCGGCGGGCGGGCGRCTTCRCYRVGCCSSCCPCCRGCCGGCCSTPVICCCRRTCSSCGYSCGKGCCQQKCCCQKQCCC</sequence>